<protein>
    <recommendedName>
        <fullName evidence="1">ATP synthase subunit delta</fullName>
    </recommendedName>
    <alternativeName>
        <fullName evidence="1">ATP synthase F(1) sector subunit delta</fullName>
    </alternativeName>
    <alternativeName>
        <fullName evidence="1">F-type ATPase subunit delta</fullName>
        <shortName evidence="1">F-ATPase subunit delta</shortName>
    </alternativeName>
</protein>
<feature type="chain" id="PRO_0000371032" description="ATP synthase subunit delta">
    <location>
        <begin position="1"/>
        <end position="179"/>
    </location>
</feature>
<dbReference type="EMBL" id="CP001034">
    <property type="protein sequence ID" value="ACB86394.1"/>
    <property type="molecule type" value="Genomic_DNA"/>
</dbReference>
<dbReference type="RefSeq" id="WP_012449226.1">
    <property type="nucleotide sequence ID" value="NC_010718.1"/>
</dbReference>
<dbReference type="SMR" id="B2A3G5"/>
<dbReference type="FunCoup" id="B2A3G5">
    <property type="interactions" value="400"/>
</dbReference>
<dbReference type="STRING" id="457570.Nther_2847"/>
<dbReference type="KEGG" id="nth:Nther_2847"/>
<dbReference type="eggNOG" id="COG0712">
    <property type="taxonomic scope" value="Bacteria"/>
</dbReference>
<dbReference type="HOGENOM" id="CLU_085114_1_1_9"/>
<dbReference type="InParanoid" id="B2A3G5"/>
<dbReference type="OrthoDB" id="9802471at2"/>
<dbReference type="Proteomes" id="UP000001683">
    <property type="component" value="Chromosome"/>
</dbReference>
<dbReference type="GO" id="GO:0005886">
    <property type="term" value="C:plasma membrane"/>
    <property type="evidence" value="ECO:0007669"/>
    <property type="project" value="UniProtKB-SubCell"/>
</dbReference>
<dbReference type="GO" id="GO:0045259">
    <property type="term" value="C:proton-transporting ATP synthase complex"/>
    <property type="evidence" value="ECO:0007669"/>
    <property type="project" value="UniProtKB-KW"/>
</dbReference>
<dbReference type="GO" id="GO:0046933">
    <property type="term" value="F:proton-transporting ATP synthase activity, rotational mechanism"/>
    <property type="evidence" value="ECO:0007669"/>
    <property type="project" value="UniProtKB-UniRule"/>
</dbReference>
<dbReference type="Gene3D" id="1.10.520.20">
    <property type="entry name" value="N-terminal domain of the delta subunit of the F1F0-ATP synthase"/>
    <property type="match status" value="1"/>
</dbReference>
<dbReference type="HAMAP" id="MF_01416">
    <property type="entry name" value="ATP_synth_delta_bact"/>
    <property type="match status" value="1"/>
</dbReference>
<dbReference type="InterPro" id="IPR026015">
    <property type="entry name" value="ATP_synth_OSCP/delta_N_sf"/>
</dbReference>
<dbReference type="InterPro" id="IPR020781">
    <property type="entry name" value="ATPase_OSCP/d_CS"/>
</dbReference>
<dbReference type="InterPro" id="IPR000711">
    <property type="entry name" value="ATPase_OSCP/dsu"/>
</dbReference>
<dbReference type="NCBIfam" id="TIGR01145">
    <property type="entry name" value="ATP_synt_delta"/>
    <property type="match status" value="1"/>
</dbReference>
<dbReference type="PANTHER" id="PTHR11910">
    <property type="entry name" value="ATP SYNTHASE DELTA CHAIN"/>
    <property type="match status" value="1"/>
</dbReference>
<dbReference type="Pfam" id="PF00213">
    <property type="entry name" value="OSCP"/>
    <property type="match status" value="1"/>
</dbReference>
<dbReference type="PRINTS" id="PR00125">
    <property type="entry name" value="ATPASEDELTA"/>
</dbReference>
<dbReference type="SUPFAM" id="SSF47928">
    <property type="entry name" value="N-terminal domain of the delta subunit of the F1F0-ATP synthase"/>
    <property type="match status" value="1"/>
</dbReference>
<dbReference type="SUPFAM" id="SSF160527">
    <property type="entry name" value="V-type ATPase subunit E-like"/>
    <property type="match status" value="1"/>
</dbReference>
<dbReference type="PROSITE" id="PS00389">
    <property type="entry name" value="ATPASE_DELTA"/>
    <property type="match status" value="1"/>
</dbReference>
<comment type="function">
    <text evidence="1">F(1)F(0) ATP synthase produces ATP from ADP in the presence of a proton or sodium gradient. F-type ATPases consist of two structural domains, F(1) containing the extramembraneous catalytic core and F(0) containing the membrane proton channel, linked together by a central stalk and a peripheral stalk. During catalysis, ATP synthesis in the catalytic domain of F(1) is coupled via a rotary mechanism of the central stalk subunits to proton translocation.</text>
</comment>
<comment type="function">
    <text evidence="1">This protein is part of the stalk that links CF(0) to CF(1). It either transmits conformational changes from CF(0) to CF(1) or is implicated in proton conduction.</text>
</comment>
<comment type="subunit">
    <text evidence="1">F-type ATPases have 2 components, F(1) - the catalytic core - and F(0) - the membrane proton channel. F(1) has five subunits: alpha(3), beta(3), gamma(1), delta(1), epsilon(1). F(0) has three main subunits: a(1), b(2) and c(10-14). The alpha and beta chains form an alternating ring which encloses part of the gamma chain. F(1) is attached to F(0) by a central stalk formed by the gamma and epsilon chains, while a peripheral stalk is formed by the delta and b chains.</text>
</comment>
<comment type="subcellular location">
    <subcellularLocation>
        <location evidence="1">Cell membrane</location>
        <topology evidence="1">Peripheral membrane protein</topology>
    </subcellularLocation>
</comment>
<comment type="similarity">
    <text evidence="1">Belongs to the ATPase delta chain family.</text>
</comment>
<reference key="1">
    <citation type="submission" date="2008-04" db="EMBL/GenBank/DDBJ databases">
        <title>Complete sequence of chromosome of Natranaerobius thermophilus JW/NM-WN-LF.</title>
        <authorList>
            <consortium name="US DOE Joint Genome Institute"/>
            <person name="Copeland A."/>
            <person name="Lucas S."/>
            <person name="Lapidus A."/>
            <person name="Glavina del Rio T."/>
            <person name="Dalin E."/>
            <person name="Tice H."/>
            <person name="Bruce D."/>
            <person name="Goodwin L."/>
            <person name="Pitluck S."/>
            <person name="Chertkov O."/>
            <person name="Brettin T."/>
            <person name="Detter J.C."/>
            <person name="Han C."/>
            <person name="Kuske C.R."/>
            <person name="Schmutz J."/>
            <person name="Larimer F."/>
            <person name="Land M."/>
            <person name="Hauser L."/>
            <person name="Kyrpides N."/>
            <person name="Lykidis A."/>
            <person name="Mesbah N.M."/>
            <person name="Wiegel J."/>
        </authorList>
    </citation>
    <scope>NUCLEOTIDE SEQUENCE [LARGE SCALE GENOMIC DNA]</scope>
    <source>
        <strain>ATCC BAA-1301 / DSM 18059 / JW/NM-WN-LF</strain>
    </source>
</reference>
<keyword id="KW-0066">ATP synthesis</keyword>
<keyword id="KW-1003">Cell membrane</keyword>
<keyword id="KW-0139">CF(1)</keyword>
<keyword id="KW-0375">Hydrogen ion transport</keyword>
<keyword id="KW-0406">Ion transport</keyword>
<keyword id="KW-0472">Membrane</keyword>
<keyword id="KW-1185">Reference proteome</keyword>
<keyword id="KW-0813">Transport</keyword>
<proteinExistence type="inferred from homology"/>
<organism>
    <name type="scientific">Natranaerobius thermophilus (strain ATCC BAA-1301 / DSM 18059 / JW/NM-WN-LF)</name>
    <dbReference type="NCBI Taxonomy" id="457570"/>
    <lineage>
        <taxon>Bacteria</taxon>
        <taxon>Bacillati</taxon>
        <taxon>Bacillota</taxon>
        <taxon>Clostridia</taxon>
        <taxon>Natranaerobiales</taxon>
        <taxon>Natranaerobiaceae</taxon>
        <taxon>Natranaerobius</taxon>
    </lineage>
</organism>
<accession>B2A3G5</accession>
<sequence length="179" mass="20727">MIIPKRYAEALFQLAKEREKINEITQSFNQLIERLRSNEEVFKLLSYPVVDIAEKKQVADELTADLEQEIRDYLKVLIDNKRTDELAEIHDTFLDLVRTEENRTLCEVKTPIPLDEDELKKIQDLLAQMSEGEVEIETTTDESIIGGIVVRIGDRVFDYSLKGQLNSLREQLKKTTITS</sequence>
<name>ATPD_NATTJ</name>
<evidence type="ECO:0000255" key="1">
    <source>
        <dbReference type="HAMAP-Rule" id="MF_01416"/>
    </source>
</evidence>
<gene>
    <name evidence="1" type="primary">atpH</name>
    <name type="ordered locus">Nther_2847</name>
</gene>